<name>RL5_CHLPD</name>
<evidence type="ECO:0000255" key="1">
    <source>
        <dbReference type="HAMAP-Rule" id="MF_01333"/>
    </source>
</evidence>
<evidence type="ECO:0000305" key="2"/>
<organism>
    <name type="scientific">Chlorobium phaeobacteroides (strain DSM 266 / SMG 266 / 2430)</name>
    <dbReference type="NCBI Taxonomy" id="290317"/>
    <lineage>
        <taxon>Bacteria</taxon>
        <taxon>Pseudomonadati</taxon>
        <taxon>Chlorobiota</taxon>
        <taxon>Chlorobiia</taxon>
        <taxon>Chlorobiales</taxon>
        <taxon>Chlorobiaceae</taxon>
        <taxon>Chlorobium/Pelodictyon group</taxon>
        <taxon>Chlorobium</taxon>
    </lineage>
</organism>
<dbReference type="EMBL" id="CP000492">
    <property type="protein sequence ID" value="ABL66399.1"/>
    <property type="molecule type" value="Genomic_DNA"/>
</dbReference>
<dbReference type="RefSeq" id="WP_011746181.1">
    <property type="nucleotide sequence ID" value="NC_008639.1"/>
</dbReference>
<dbReference type="SMR" id="A1BJ22"/>
<dbReference type="STRING" id="290317.Cpha266_2411"/>
<dbReference type="KEGG" id="cph:Cpha266_2411"/>
<dbReference type="eggNOG" id="COG0094">
    <property type="taxonomic scope" value="Bacteria"/>
</dbReference>
<dbReference type="HOGENOM" id="CLU_061015_2_1_10"/>
<dbReference type="OrthoDB" id="9806626at2"/>
<dbReference type="Proteomes" id="UP000008701">
    <property type="component" value="Chromosome"/>
</dbReference>
<dbReference type="GO" id="GO:1990904">
    <property type="term" value="C:ribonucleoprotein complex"/>
    <property type="evidence" value="ECO:0007669"/>
    <property type="project" value="UniProtKB-KW"/>
</dbReference>
<dbReference type="GO" id="GO:0005840">
    <property type="term" value="C:ribosome"/>
    <property type="evidence" value="ECO:0007669"/>
    <property type="project" value="UniProtKB-KW"/>
</dbReference>
<dbReference type="GO" id="GO:0019843">
    <property type="term" value="F:rRNA binding"/>
    <property type="evidence" value="ECO:0007669"/>
    <property type="project" value="UniProtKB-UniRule"/>
</dbReference>
<dbReference type="GO" id="GO:0003735">
    <property type="term" value="F:structural constituent of ribosome"/>
    <property type="evidence" value="ECO:0007669"/>
    <property type="project" value="InterPro"/>
</dbReference>
<dbReference type="GO" id="GO:0000049">
    <property type="term" value="F:tRNA binding"/>
    <property type="evidence" value="ECO:0007669"/>
    <property type="project" value="UniProtKB-UniRule"/>
</dbReference>
<dbReference type="GO" id="GO:0006412">
    <property type="term" value="P:translation"/>
    <property type="evidence" value="ECO:0007669"/>
    <property type="project" value="UniProtKB-UniRule"/>
</dbReference>
<dbReference type="FunFam" id="3.30.1440.10:FF:000001">
    <property type="entry name" value="50S ribosomal protein L5"/>
    <property type="match status" value="1"/>
</dbReference>
<dbReference type="Gene3D" id="3.30.1440.10">
    <property type="match status" value="1"/>
</dbReference>
<dbReference type="HAMAP" id="MF_01333_B">
    <property type="entry name" value="Ribosomal_uL5_B"/>
    <property type="match status" value="1"/>
</dbReference>
<dbReference type="InterPro" id="IPR002132">
    <property type="entry name" value="Ribosomal_uL5"/>
</dbReference>
<dbReference type="InterPro" id="IPR020930">
    <property type="entry name" value="Ribosomal_uL5_bac-type"/>
</dbReference>
<dbReference type="InterPro" id="IPR031309">
    <property type="entry name" value="Ribosomal_uL5_C"/>
</dbReference>
<dbReference type="InterPro" id="IPR022803">
    <property type="entry name" value="Ribosomal_uL5_dom_sf"/>
</dbReference>
<dbReference type="InterPro" id="IPR031310">
    <property type="entry name" value="Ribosomal_uL5_N"/>
</dbReference>
<dbReference type="NCBIfam" id="NF000585">
    <property type="entry name" value="PRK00010.1"/>
    <property type="match status" value="1"/>
</dbReference>
<dbReference type="PANTHER" id="PTHR11994">
    <property type="entry name" value="60S RIBOSOMAL PROTEIN L11-RELATED"/>
    <property type="match status" value="1"/>
</dbReference>
<dbReference type="Pfam" id="PF00281">
    <property type="entry name" value="Ribosomal_L5"/>
    <property type="match status" value="1"/>
</dbReference>
<dbReference type="Pfam" id="PF00673">
    <property type="entry name" value="Ribosomal_L5_C"/>
    <property type="match status" value="1"/>
</dbReference>
<dbReference type="PIRSF" id="PIRSF002161">
    <property type="entry name" value="Ribosomal_L5"/>
    <property type="match status" value="1"/>
</dbReference>
<dbReference type="SUPFAM" id="SSF55282">
    <property type="entry name" value="RL5-like"/>
    <property type="match status" value="1"/>
</dbReference>
<sequence length="195" mass="22287">MTRKKDETPAEKVEARLESFYREKVVPVMMERFQYSNVMMVPKLEKISINIGVGEAAAEPKLLETAMLELGQITGQKPQVRKSRKAISNFKLRENQAIGCRVTLRRKKMYEFLDRFVSLAVPRIRDFRGLSNTSFDGRGNYTAGIREQIIFPEIDIDKVPRICGMDISFVTSAATDEEAYVLLAELGMPFKKKNN</sequence>
<feature type="chain" id="PRO_1000052716" description="Large ribosomal subunit protein uL5">
    <location>
        <begin position="1"/>
        <end position="195"/>
    </location>
</feature>
<accession>A1BJ22</accession>
<protein>
    <recommendedName>
        <fullName evidence="1">Large ribosomal subunit protein uL5</fullName>
    </recommendedName>
    <alternativeName>
        <fullName evidence="2">50S ribosomal protein L5</fullName>
    </alternativeName>
</protein>
<reference key="1">
    <citation type="submission" date="2006-12" db="EMBL/GenBank/DDBJ databases">
        <title>Complete sequence of Chlorobium phaeobacteroides DSM 266.</title>
        <authorList>
            <consortium name="US DOE Joint Genome Institute"/>
            <person name="Copeland A."/>
            <person name="Lucas S."/>
            <person name="Lapidus A."/>
            <person name="Barry K."/>
            <person name="Detter J.C."/>
            <person name="Glavina del Rio T."/>
            <person name="Hammon N."/>
            <person name="Israni S."/>
            <person name="Pitluck S."/>
            <person name="Goltsman E."/>
            <person name="Schmutz J."/>
            <person name="Larimer F."/>
            <person name="Land M."/>
            <person name="Hauser L."/>
            <person name="Mikhailova N."/>
            <person name="Li T."/>
            <person name="Overmann J."/>
            <person name="Bryant D.A."/>
            <person name="Richardson P."/>
        </authorList>
    </citation>
    <scope>NUCLEOTIDE SEQUENCE [LARGE SCALE GENOMIC DNA]</scope>
    <source>
        <strain>DSM 266 / SMG 266 / 2430</strain>
    </source>
</reference>
<proteinExistence type="inferred from homology"/>
<comment type="function">
    <text evidence="1">This is one of the proteins that bind and probably mediate the attachment of the 5S RNA into the large ribosomal subunit, where it forms part of the central protuberance. In the 70S ribosome it contacts protein S13 of the 30S subunit (bridge B1b), connecting the 2 subunits; this bridge is implicated in subunit movement. Contacts the P site tRNA; the 5S rRNA and some of its associated proteins might help stabilize positioning of ribosome-bound tRNAs.</text>
</comment>
<comment type="subunit">
    <text evidence="1">Part of the 50S ribosomal subunit; part of the 5S rRNA/L5/L18/L25 subcomplex. Contacts the 5S rRNA and the P site tRNA. Forms a bridge to the 30S subunit in the 70S ribosome.</text>
</comment>
<comment type="similarity">
    <text evidence="1">Belongs to the universal ribosomal protein uL5 family.</text>
</comment>
<keyword id="KW-1185">Reference proteome</keyword>
<keyword id="KW-0687">Ribonucleoprotein</keyword>
<keyword id="KW-0689">Ribosomal protein</keyword>
<keyword id="KW-0694">RNA-binding</keyword>
<keyword id="KW-0699">rRNA-binding</keyword>
<keyword id="KW-0820">tRNA-binding</keyword>
<gene>
    <name evidence="1" type="primary">rplE</name>
    <name type="ordered locus">Cpha266_2411</name>
</gene>